<evidence type="ECO:0000255" key="1">
    <source>
        <dbReference type="HAMAP-Rule" id="MF_00382"/>
    </source>
</evidence>
<evidence type="ECO:0000305" key="2"/>
<organism>
    <name type="scientific">Burkholderia cenocepacia (strain HI2424)</name>
    <dbReference type="NCBI Taxonomy" id="331272"/>
    <lineage>
        <taxon>Bacteria</taxon>
        <taxon>Pseudomonadati</taxon>
        <taxon>Pseudomonadota</taxon>
        <taxon>Betaproteobacteria</taxon>
        <taxon>Burkholderiales</taxon>
        <taxon>Burkholderiaceae</taxon>
        <taxon>Burkholderia</taxon>
        <taxon>Burkholderia cepacia complex</taxon>
    </lineage>
</organism>
<comment type="function">
    <text evidence="1">Binds directly to 23S ribosomal RNA and is necessary for the in vitro assembly process of the 50S ribosomal subunit. It is not involved in the protein synthesizing functions of that subunit.</text>
</comment>
<comment type="similarity">
    <text evidence="1">Belongs to the bacterial ribosomal protein bL20 family.</text>
</comment>
<reference key="1">
    <citation type="submission" date="2006-08" db="EMBL/GenBank/DDBJ databases">
        <title>Complete sequence of chromosome 1 of Burkholderia cenocepacia HI2424.</title>
        <authorList>
            <person name="Copeland A."/>
            <person name="Lucas S."/>
            <person name="Lapidus A."/>
            <person name="Barry K."/>
            <person name="Detter J.C."/>
            <person name="Glavina del Rio T."/>
            <person name="Hammon N."/>
            <person name="Israni S."/>
            <person name="Pitluck S."/>
            <person name="Chain P."/>
            <person name="Malfatti S."/>
            <person name="Shin M."/>
            <person name="Vergez L."/>
            <person name="Schmutz J."/>
            <person name="Larimer F."/>
            <person name="Land M."/>
            <person name="Hauser L."/>
            <person name="Kyrpides N."/>
            <person name="Kim E."/>
            <person name="LiPuma J.J."/>
            <person name="Gonzalez C.F."/>
            <person name="Konstantinidis K."/>
            <person name="Tiedje J.M."/>
            <person name="Richardson P."/>
        </authorList>
    </citation>
    <scope>NUCLEOTIDE SEQUENCE [LARGE SCALE GENOMIC DNA]</scope>
    <source>
        <strain>HI2424</strain>
    </source>
</reference>
<sequence length="119" mass="13644">MPRVKRGVTARARHKKIINLAKGYRGRRNNVYRIAKQAVMRAGQYAYRDRRNKKRVFRALWITRINAAVRQHDMTYSVFINGLKKASIELDRKVLADMAVFDKAAFAAIVKQVKAAVAA</sequence>
<name>RL20_BURCH</name>
<dbReference type="EMBL" id="CP000458">
    <property type="protein sequence ID" value="ABK08230.1"/>
    <property type="molecule type" value="Genomic_DNA"/>
</dbReference>
<dbReference type="RefSeq" id="WP_004192938.1">
    <property type="nucleotide sequence ID" value="NC_008542.1"/>
</dbReference>
<dbReference type="SMR" id="A0K6V3"/>
<dbReference type="GeneID" id="98102114"/>
<dbReference type="KEGG" id="bch:Bcen2424_1478"/>
<dbReference type="HOGENOM" id="CLU_123265_0_1_4"/>
<dbReference type="GO" id="GO:1990904">
    <property type="term" value="C:ribonucleoprotein complex"/>
    <property type="evidence" value="ECO:0007669"/>
    <property type="project" value="UniProtKB-KW"/>
</dbReference>
<dbReference type="GO" id="GO:0005840">
    <property type="term" value="C:ribosome"/>
    <property type="evidence" value="ECO:0007669"/>
    <property type="project" value="UniProtKB-KW"/>
</dbReference>
<dbReference type="GO" id="GO:0019843">
    <property type="term" value="F:rRNA binding"/>
    <property type="evidence" value="ECO:0007669"/>
    <property type="project" value="UniProtKB-UniRule"/>
</dbReference>
<dbReference type="GO" id="GO:0003735">
    <property type="term" value="F:structural constituent of ribosome"/>
    <property type="evidence" value="ECO:0007669"/>
    <property type="project" value="InterPro"/>
</dbReference>
<dbReference type="GO" id="GO:0000027">
    <property type="term" value="P:ribosomal large subunit assembly"/>
    <property type="evidence" value="ECO:0007669"/>
    <property type="project" value="UniProtKB-UniRule"/>
</dbReference>
<dbReference type="GO" id="GO:0006412">
    <property type="term" value="P:translation"/>
    <property type="evidence" value="ECO:0007669"/>
    <property type="project" value="InterPro"/>
</dbReference>
<dbReference type="CDD" id="cd07026">
    <property type="entry name" value="Ribosomal_L20"/>
    <property type="match status" value="1"/>
</dbReference>
<dbReference type="FunFam" id="1.10.1900.20:FF:000001">
    <property type="entry name" value="50S ribosomal protein L20"/>
    <property type="match status" value="1"/>
</dbReference>
<dbReference type="Gene3D" id="6.10.160.10">
    <property type="match status" value="1"/>
</dbReference>
<dbReference type="Gene3D" id="1.10.1900.20">
    <property type="entry name" value="Ribosomal protein L20"/>
    <property type="match status" value="1"/>
</dbReference>
<dbReference type="HAMAP" id="MF_00382">
    <property type="entry name" value="Ribosomal_bL20"/>
    <property type="match status" value="1"/>
</dbReference>
<dbReference type="InterPro" id="IPR005813">
    <property type="entry name" value="Ribosomal_bL20"/>
</dbReference>
<dbReference type="InterPro" id="IPR049946">
    <property type="entry name" value="RIBOSOMAL_L20_CS"/>
</dbReference>
<dbReference type="InterPro" id="IPR035566">
    <property type="entry name" value="Ribosomal_protein_bL20_C"/>
</dbReference>
<dbReference type="NCBIfam" id="TIGR01032">
    <property type="entry name" value="rplT_bact"/>
    <property type="match status" value="1"/>
</dbReference>
<dbReference type="PANTHER" id="PTHR10986">
    <property type="entry name" value="39S RIBOSOMAL PROTEIN L20"/>
    <property type="match status" value="1"/>
</dbReference>
<dbReference type="Pfam" id="PF00453">
    <property type="entry name" value="Ribosomal_L20"/>
    <property type="match status" value="1"/>
</dbReference>
<dbReference type="PRINTS" id="PR00062">
    <property type="entry name" value="RIBOSOMALL20"/>
</dbReference>
<dbReference type="SUPFAM" id="SSF74731">
    <property type="entry name" value="Ribosomal protein L20"/>
    <property type="match status" value="1"/>
</dbReference>
<dbReference type="PROSITE" id="PS00937">
    <property type="entry name" value="RIBOSOMAL_L20"/>
    <property type="match status" value="1"/>
</dbReference>
<keyword id="KW-0687">Ribonucleoprotein</keyword>
<keyword id="KW-0689">Ribosomal protein</keyword>
<keyword id="KW-0694">RNA-binding</keyword>
<keyword id="KW-0699">rRNA-binding</keyword>
<proteinExistence type="inferred from homology"/>
<feature type="chain" id="PRO_1000048937" description="Large ribosomal subunit protein bL20">
    <location>
        <begin position="1"/>
        <end position="119"/>
    </location>
</feature>
<accession>A0K6V3</accession>
<protein>
    <recommendedName>
        <fullName evidence="1">Large ribosomal subunit protein bL20</fullName>
    </recommendedName>
    <alternativeName>
        <fullName evidence="2">50S ribosomal protein L20</fullName>
    </alternativeName>
</protein>
<gene>
    <name evidence="1" type="primary">rplT</name>
    <name type="ordered locus">Bcen2424_1478</name>
</gene>